<sequence length="334" mass="37249">MKFIDQAIIHVIAGNGGNGCVSFRREKYIPKGGPDGGNGGDGGNIWLEANNNLNTLIDLRFKKKFQAQNGQNGSSRKSSGKKGDDIKIHVPIGTKVINYQTREIIGDLIQHKQKMLIAKGGWHGLGNARFKSSTNRTPRQSTLGSIGEKRDIQLELMLLADVGTLGMPNVGKSTLVTNISGAKTKISDYPFTTLHPVLGSVNIQKNKKFIIADIPGIIKGASYGAGLGIRFLKHLERCKLLLHIIDLVPQNNCHPSDNIKTVLNELKKYSLKLYNKPRWFIFNKIDLLSVEELNQIIKEIIFQFKIHEKYYLISSMKKIGIKKLCSDITKYLKK</sequence>
<accession>B8D7S4</accession>
<protein>
    <recommendedName>
        <fullName evidence="1">GTPase Obg</fullName>
        <ecNumber evidence="1">3.6.5.-</ecNumber>
    </recommendedName>
    <alternativeName>
        <fullName evidence="1">GTP-binding protein Obg</fullName>
    </alternativeName>
</protein>
<name>OBG_BUCAT</name>
<proteinExistence type="inferred from homology"/>
<keyword id="KW-0963">Cytoplasm</keyword>
<keyword id="KW-0342">GTP-binding</keyword>
<keyword id="KW-0378">Hydrolase</keyword>
<keyword id="KW-0460">Magnesium</keyword>
<keyword id="KW-0479">Metal-binding</keyword>
<keyword id="KW-0547">Nucleotide-binding</keyword>
<feature type="chain" id="PRO_0000385774" description="GTPase Obg">
    <location>
        <begin position="1"/>
        <end position="334"/>
    </location>
</feature>
<feature type="domain" description="Obg" evidence="2">
    <location>
        <begin position="1"/>
        <end position="159"/>
    </location>
</feature>
<feature type="domain" description="OBG-type G" evidence="1">
    <location>
        <begin position="160"/>
        <end position="333"/>
    </location>
</feature>
<feature type="region of interest" description="Disordered" evidence="3">
    <location>
        <begin position="67"/>
        <end position="86"/>
    </location>
</feature>
<feature type="compositionally biased region" description="Low complexity" evidence="3">
    <location>
        <begin position="68"/>
        <end position="77"/>
    </location>
</feature>
<feature type="binding site" evidence="1">
    <location>
        <begin position="166"/>
        <end position="173"/>
    </location>
    <ligand>
        <name>GTP</name>
        <dbReference type="ChEBI" id="CHEBI:37565"/>
    </ligand>
</feature>
<feature type="binding site" evidence="1">
    <location>
        <position position="173"/>
    </location>
    <ligand>
        <name>Mg(2+)</name>
        <dbReference type="ChEBI" id="CHEBI:18420"/>
    </ligand>
</feature>
<feature type="binding site" evidence="1">
    <location>
        <begin position="191"/>
        <end position="195"/>
    </location>
    <ligand>
        <name>GTP</name>
        <dbReference type="ChEBI" id="CHEBI:37565"/>
    </ligand>
</feature>
<feature type="binding site" evidence="1">
    <location>
        <position position="193"/>
    </location>
    <ligand>
        <name>Mg(2+)</name>
        <dbReference type="ChEBI" id="CHEBI:18420"/>
    </ligand>
</feature>
<feature type="binding site" evidence="1">
    <location>
        <begin position="213"/>
        <end position="216"/>
    </location>
    <ligand>
        <name>GTP</name>
        <dbReference type="ChEBI" id="CHEBI:37565"/>
    </ligand>
</feature>
<feature type="binding site" evidence="1">
    <location>
        <begin position="283"/>
        <end position="286"/>
    </location>
    <ligand>
        <name>GTP</name>
        <dbReference type="ChEBI" id="CHEBI:37565"/>
    </ligand>
</feature>
<feature type="binding site" evidence="1">
    <location>
        <begin position="314"/>
        <end position="316"/>
    </location>
    <ligand>
        <name>GTP</name>
        <dbReference type="ChEBI" id="CHEBI:37565"/>
    </ligand>
</feature>
<reference key="1">
    <citation type="journal article" date="2009" name="Science">
        <title>The dynamics and time scale of ongoing genomic erosion in symbiotic bacteria.</title>
        <authorList>
            <person name="Moran N.A."/>
            <person name="McLaughlin H.J."/>
            <person name="Sorek R."/>
        </authorList>
    </citation>
    <scope>NUCLEOTIDE SEQUENCE [LARGE SCALE GENOMIC DNA]</scope>
    <source>
        <strain>Tuc7</strain>
    </source>
</reference>
<organism>
    <name type="scientific">Buchnera aphidicola subsp. Acyrthosiphon pisum (strain Tuc7)</name>
    <dbReference type="NCBI Taxonomy" id="561501"/>
    <lineage>
        <taxon>Bacteria</taxon>
        <taxon>Pseudomonadati</taxon>
        <taxon>Pseudomonadota</taxon>
        <taxon>Gammaproteobacteria</taxon>
        <taxon>Enterobacterales</taxon>
        <taxon>Erwiniaceae</taxon>
        <taxon>Buchnera</taxon>
    </lineage>
</organism>
<gene>
    <name evidence="1" type="primary">obg</name>
    <name type="ordered locus">BUAPTUC7_383</name>
</gene>
<comment type="function">
    <text evidence="1">An essential GTPase which binds GTP, GDP and possibly (p)ppGpp with moderate affinity, with high nucleotide exchange rates and a fairly low GTP hydrolysis rate. Plays a role in control of the cell cycle, stress response, ribosome biogenesis and in those bacteria that undergo differentiation, in morphogenesis control.</text>
</comment>
<comment type="cofactor">
    <cofactor evidence="1">
        <name>Mg(2+)</name>
        <dbReference type="ChEBI" id="CHEBI:18420"/>
    </cofactor>
</comment>
<comment type="subunit">
    <text evidence="1">Monomer.</text>
</comment>
<comment type="subcellular location">
    <subcellularLocation>
        <location evidence="1">Cytoplasm</location>
    </subcellularLocation>
</comment>
<comment type="similarity">
    <text evidence="1">Belongs to the TRAFAC class OBG-HflX-like GTPase superfamily. OBG GTPase family.</text>
</comment>
<dbReference type="EC" id="3.6.5.-" evidence="1"/>
<dbReference type="EMBL" id="CP001158">
    <property type="protein sequence ID" value="ACL30189.1"/>
    <property type="molecule type" value="Genomic_DNA"/>
</dbReference>
<dbReference type="SMR" id="B8D7S4"/>
<dbReference type="KEGG" id="bau:BUAPTUC7_383"/>
<dbReference type="HOGENOM" id="CLU_011747_2_0_6"/>
<dbReference type="GO" id="GO:0005737">
    <property type="term" value="C:cytoplasm"/>
    <property type="evidence" value="ECO:0007669"/>
    <property type="project" value="UniProtKB-SubCell"/>
</dbReference>
<dbReference type="GO" id="GO:0005525">
    <property type="term" value="F:GTP binding"/>
    <property type="evidence" value="ECO:0007669"/>
    <property type="project" value="UniProtKB-UniRule"/>
</dbReference>
<dbReference type="GO" id="GO:0003924">
    <property type="term" value="F:GTPase activity"/>
    <property type="evidence" value="ECO:0007669"/>
    <property type="project" value="UniProtKB-UniRule"/>
</dbReference>
<dbReference type="GO" id="GO:0000287">
    <property type="term" value="F:magnesium ion binding"/>
    <property type="evidence" value="ECO:0007669"/>
    <property type="project" value="InterPro"/>
</dbReference>
<dbReference type="GO" id="GO:0042254">
    <property type="term" value="P:ribosome biogenesis"/>
    <property type="evidence" value="ECO:0007669"/>
    <property type="project" value="UniProtKB-UniRule"/>
</dbReference>
<dbReference type="CDD" id="cd01898">
    <property type="entry name" value="Obg"/>
    <property type="match status" value="1"/>
</dbReference>
<dbReference type="FunFam" id="2.70.210.12:FF:000001">
    <property type="entry name" value="GTPase Obg"/>
    <property type="match status" value="1"/>
</dbReference>
<dbReference type="Gene3D" id="2.70.210.12">
    <property type="entry name" value="GTP1/OBG domain"/>
    <property type="match status" value="1"/>
</dbReference>
<dbReference type="Gene3D" id="3.40.50.300">
    <property type="entry name" value="P-loop containing nucleotide triphosphate hydrolases"/>
    <property type="match status" value="1"/>
</dbReference>
<dbReference type="HAMAP" id="MF_01454">
    <property type="entry name" value="GTPase_Obg"/>
    <property type="match status" value="1"/>
</dbReference>
<dbReference type="InterPro" id="IPR031167">
    <property type="entry name" value="G_OBG"/>
</dbReference>
<dbReference type="InterPro" id="IPR006073">
    <property type="entry name" value="GTP-bd"/>
</dbReference>
<dbReference type="InterPro" id="IPR014100">
    <property type="entry name" value="GTP-bd_Obg/CgtA"/>
</dbReference>
<dbReference type="InterPro" id="IPR006074">
    <property type="entry name" value="GTP1-OBG_CS"/>
</dbReference>
<dbReference type="InterPro" id="IPR006169">
    <property type="entry name" value="GTP1_OBG_dom"/>
</dbReference>
<dbReference type="InterPro" id="IPR036726">
    <property type="entry name" value="GTP1_OBG_dom_sf"/>
</dbReference>
<dbReference type="InterPro" id="IPR045086">
    <property type="entry name" value="OBG_GTPase"/>
</dbReference>
<dbReference type="InterPro" id="IPR027417">
    <property type="entry name" value="P-loop_NTPase"/>
</dbReference>
<dbReference type="NCBIfam" id="TIGR02729">
    <property type="entry name" value="Obg_CgtA"/>
    <property type="match status" value="1"/>
</dbReference>
<dbReference type="NCBIfam" id="NF008955">
    <property type="entry name" value="PRK12297.1"/>
    <property type="match status" value="1"/>
</dbReference>
<dbReference type="NCBIfam" id="NF008956">
    <property type="entry name" value="PRK12299.1"/>
    <property type="match status" value="1"/>
</dbReference>
<dbReference type="PANTHER" id="PTHR11702">
    <property type="entry name" value="DEVELOPMENTALLY REGULATED GTP-BINDING PROTEIN-RELATED"/>
    <property type="match status" value="1"/>
</dbReference>
<dbReference type="PANTHER" id="PTHR11702:SF31">
    <property type="entry name" value="MITOCHONDRIAL RIBOSOME-ASSOCIATED GTPASE 2"/>
    <property type="match status" value="1"/>
</dbReference>
<dbReference type="Pfam" id="PF01018">
    <property type="entry name" value="GTP1_OBG"/>
    <property type="match status" value="1"/>
</dbReference>
<dbReference type="Pfam" id="PF01926">
    <property type="entry name" value="MMR_HSR1"/>
    <property type="match status" value="1"/>
</dbReference>
<dbReference type="PIRSF" id="PIRSF002401">
    <property type="entry name" value="GTP_bd_Obg/CgtA"/>
    <property type="match status" value="1"/>
</dbReference>
<dbReference type="PRINTS" id="PR00326">
    <property type="entry name" value="GTP1OBG"/>
</dbReference>
<dbReference type="SUPFAM" id="SSF82051">
    <property type="entry name" value="Obg GTP-binding protein N-terminal domain"/>
    <property type="match status" value="1"/>
</dbReference>
<dbReference type="SUPFAM" id="SSF52540">
    <property type="entry name" value="P-loop containing nucleoside triphosphate hydrolases"/>
    <property type="match status" value="1"/>
</dbReference>
<dbReference type="PROSITE" id="PS51710">
    <property type="entry name" value="G_OBG"/>
    <property type="match status" value="1"/>
</dbReference>
<dbReference type="PROSITE" id="PS00905">
    <property type="entry name" value="GTP1_OBG"/>
    <property type="match status" value="1"/>
</dbReference>
<dbReference type="PROSITE" id="PS51883">
    <property type="entry name" value="OBG"/>
    <property type="match status" value="1"/>
</dbReference>
<evidence type="ECO:0000255" key="1">
    <source>
        <dbReference type="HAMAP-Rule" id="MF_01454"/>
    </source>
</evidence>
<evidence type="ECO:0000255" key="2">
    <source>
        <dbReference type="PROSITE-ProRule" id="PRU01231"/>
    </source>
</evidence>
<evidence type="ECO:0000256" key="3">
    <source>
        <dbReference type="SAM" id="MobiDB-lite"/>
    </source>
</evidence>